<gene>
    <name type="primary">hisS</name>
    <name type="ordered locus">STM2522</name>
</gene>
<dbReference type="EC" id="6.1.1.21"/>
<dbReference type="EMBL" id="AF047040">
    <property type="protein sequence ID" value="AAC03121.1"/>
    <property type="molecule type" value="Genomic_DNA"/>
</dbReference>
<dbReference type="EMBL" id="AE006468">
    <property type="protein sequence ID" value="AAL21416.1"/>
    <property type="molecule type" value="Genomic_DNA"/>
</dbReference>
<dbReference type="RefSeq" id="NP_461457.1">
    <property type="nucleotide sequence ID" value="NC_003197.2"/>
</dbReference>
<dbReference type="RefSeq" id="WP_001107141.1">
    <property type="nucleotide sequence ID" value="NC_003197.2"/>
</dbReference>
<dbReference type="SMR" id="O52765"/>
<dbReference type="STRING" id="99287.STM2522"/>
<dbReference type="PaxDb" id="99287-STM2522"/>
<dbReference type="GeneID" id="1254044"/>
<dbReference type="KEGG" id="stm:STM2522"/>
<dbReference type="PATRIC" id="fig|99287.12.peg.2659"/>
<dbReference type="HOGENOM" id="CLU_025113_1_1_6"/>
<dbReference type="OMA" id="CGGGNFK"/>
<dbReference type="PhylomeDB" id="O52765"/>
<dbReference type="BioCyc" id="SENT99287:STM2522-MONOMER"/>
<dbReference type="BRENDA" id="6.1.1.21">
    <property type="organism ID" value="5542"/>
</dbReference>
<dbReference type="SABIO-RK" id="O52765"/>
<dbReference type="Proteomes" id="UP000001014">
    <property type="component" value="Chromosome"/>
</dbReference>
<dbReference type="GO" id="GO:0005737">
    <property type="term" value="C:cytoplasm"/>
    <property type="evidence" value="ECO:0007669"/>
    <property type="project" value="UniProtKB-SubCell"/>
</dbReference>
<dbReference type="GO" id="GO:0005524">
    <property type="term" value="F:ATP binding"/>
    <property type="evidence" value="ECO:0007669"/>
    <property type="project" value="UniProtKB-UniRule"/>
</dbReference>
<dbReference type="GO" id="GO:0004821">
    <property type="term" value="F:histidine-tRNA ligase activity"/>
    <property type="evidence" value="ECO:0000318"/>
    <property type="project" value="GO_Central"/>
</dbReference>
<dbReference type="GO" id="GO:0006427">
    <property type="term" value="P:histidyl-tRNA aminoacylation"/>
    <property type="evidence" value="ECO:0000318"/>
    <property type="project" value="GO_Central"/>
</dbReference>
<dbReference type="CDD" id="cd00773">
    <property type="entry name" value="HisRS-like_core"/>
    <property type="match status" value="1"/>
</dbReference>
<dbReference type="CDD" id="cd00859">
    <property type="entry name" value="HisRS_anticodon"/>
    <property type="match status" value="1"/>
</dbReference>
<dbReference type="FunFam" id="3.30.930.10:FF:000005">
    <property type="entry name" value="Histidine--tRNA ligase"/>
    <property type="match status" value="1"/>
</dbReference>
<dbReference type="FunFam" id="3.40.50.800:FF:000007">
    <property type="entry name" value="Histidine--tRNA ligase"/>
    <property type="match status" value="1"/>
</dbReference>
<dbReference type="Gene3D" id="3.40.50.800">
    <property type="entry name" value="Anticodon-binding domain"/>
    <property type="match status" value="1"/>
</dbReference>
<dbReference type="Gene3D" id="3.30.930.10">
    <property type="entry name" value="Bira Bifunctional Protein, Domain 2"/>
    <property type="match status" value="1"/>
</dbReference>
<dbReference type="HAMAP" id="MF_00127">
    <property type="entry name" value="His_tRNA_synth"/>
    <property type="match status" value="1"/>
</dbReference>
<dbReference type="InterPro" id="IPR006195">
    <property type="entry name" value="aa-tRNA-synth_II"/>
</dbReference>
<dbReference type="InterPro" id="IPR045864">
    <property type="entry name" value="aa-tRNA-synth_II/BPL/LPL"/>
</dbReference>
<dbReference type="InterPro" id="IPR004154">
    <property type="entry name" value="Anticodon-bd"/>
</dbReference>
<dbReference type="InterPro" id="IPR036621">
    <property type="entry name" value="Anticodon-bd_dom_sf"/>
</dbReference>
<dbReference type="InterPro" id="IPR015807">
    <property type="entry name" value="His-tRNA-ligase"/>
</dbReference>
<dbReference type="InterPro" id="IPR041715">
    <property type="entry name" value="HisRS-like_core"/>
</dbReference>
<dbReference type="InterPro" id="IPR004516">
    <property type="entry name" value="HisRS/HisZ"/>
</dbReference>
<dbReference type="InterPro" id="IPR033656">
    <property type="entry name" value="HisRS_anticodon"/>
</dbReference>
<dbReference type="NCBIfam" id="TIGR00442">
    <property type="entry name" value="hisS"/>
    <property type="match status" value="1"/>
</dbReference>
<dbReference type="PANTHER" id="PTHR43707:SF1">
    <property type="entry name" value="HISTIDINE--TRNA LIGASE, MITOCHONDRIAL-RELATED"/>
    <property type="match status" value="1"/>
</dbReference>
<dbReference type="PANTHER" id="PTHR43707">
    <property type="entry name" value="HISTIDYL-TRNA SYNTHETASE"/>
    <property type="match status" value="1"/>
</dbReference>
<dbReference type="Pfam" id="PF03129">
    <property type="entry name" value="HGTP_anticodon"/>
    <property type="match status" value="1"/>
</dbReference>
<dbReference type="Pfam" id="PF13393">
    <property type="entry name" value="tRNA-synt_His"/>
    <property type="match status" value="1"/>
</dbReference>
<dbReference type="PIRSF" id="PIRSF001549">
    <property type="entry name" value="His-tRNA_synth"/>
    <property type="match status" value="1"/>
</dbReference>
<dbReference type="SUPFAM" id="SSF52954">
    <property type="entry name" value="Class II aaRS ABD-related"/>
    <property type="match status" value="1"/>
</dbReference>
<dbReference type="SUPFAM" id="SSF55681">
    <property type="entry name" value="Class II aaRS and biotin synthetases"/>
    <property type="match status" value="1"/>
</dbReference>
<dbReference type="PROSITE" id="PS50862">
    <property type="entry name" value="AA_TRNA_LIGASE_II"/>
    <property type="match status" value="1"/>
</dbReference>
<evidence type="ECO:0000250" key="1"/>
<evidence type="ECO:0000269" key="2">
    <source>
    </source>
</evidence>
<evidence type="ECO:0000305" key="3"/>
<sequence>MAKNIQAIRGMNDYLPGETAIWQRIEGTLKNVLGSYGYSEIRLPIVEQTPLFKRAIGEVTDVVEKEMYTFEDRNGDSLTLRPEGTAGCVRAGIEHGLLYNQEQRLWYIGPMFRHERPQKGRYRQFHQLGAEVFGLQGPDIDAELIMLTARWWRALGIAEHVSLELNSIGSLEARANYRDALVAFLEQHQETLDEDCKRRMYTNPLRVLDSKNPDVQALLNDAPALGDYLDDDSREHFAGLCKLLDAAGIAYTVNQRLVRGLDYYNRTVFEWVTNSLGSQGTVCAGGRYDGLVEQLGGRATPAVGFAMGLERLVLLVQAVNPEFIASPVVDIYLVAAGAQTQSAAMTLAERLRDEMPGVKLMTNHGGGNFKKQFARADKWGARIALVLGESEVADGTVVVKDLRSGEQTAVAQDSVAAHLRTLLG</sequence>
<name>SYH_SALTY</name>
<organism>
    <name type="scientific">Salmonella typhimurium (strain LT2 / SGSC1412 / ATCC 700720)</name>
    <dbReference type="NCBI Taxonomy" id="99287"/>
    <lineage>
        <taxon>Bacteria</taxon>
        <taxon>Pseudomonadati</taxon>
        <taxon>Pseudomonadota</taxon>
        <taxon>Gammaproteobacteria</taxon>
        <taxon>Enterobacterales</taxon>
        <taxon>Enterobacteriaceae</taxon>
        <taxon>Salmonella</taxon>
    </lineage>
</organism>
<reference key="1">
    <citation type="journal article" date="1998" name="J. Mol. Biol.">
        <title>Catalytic defects in mutants of class II histidyl-tRNA synthetase from Salmonella typhimurium previously linked to decreased control of histidine biosynthesis regulation.</title>
        <authorList>
            <person name="Francklyn C.S."/>
            <person name="Adams J."/>
            <person name="Augustine J."/>
        </authorList>
    </citation>
    <scope>NUCLEOTIDE SEQUENCE [GENOMIC DNA]</scope>
    <scope>MUTAGENESIS OF PRO-117; SER-167; ASN-254 AND ALA-302</scope>
    <source>
        <strain>LT2</strain>
    </source>
</reference>
<reference key="2">
    <citation type="journal article" date="2001" name="Nature">
        <title>Complete genome sequence of Salmonella enterica serovar Typhimurium LT2.</title>
        <authorList>
            <person name="McClelland M."/>
            <person name="Sanderson K.E."/>
            <person name="Spieth J."/>
            <person name="Clifton S.W."/>
            <person name="Latreille P."/>
            <person name="Courtney L."/>
            <person name="Porwollik S."/>
            <person name="Ali J."/>
            <person name="Dante M."/>
            <person name="Du F."/>
            <person name="Hou S."/>
            <person name="Layman D."/>
            <person name="Leonard S."/>
            <person name="Nguyen C."/>
            <person name="Scott K."/>
            <person name="Holmes A."/>
            <person name="Grewal N."/>
            <person name="Mulvaney E."/>
            <person name="Ryan E."/>
            <person name="Sun H."/>
            <person name="Florea L."/>
            <person name="Miller W."/>
            <person name="Stoneking T."/>
            <person name="Nhan M."/>
            <person name="Waterston R."/>
            <person name="Wilson R.K."/>
        </authorList>
    </citation>
    <scope>NUCLEOTIDE SEQUENCE [LARGE SCALE GENOMIC DNA]</scope>
    <source>
        <strain>LT2 / SGSC1412 / ATCC 700720</strain>
    </source>
</reference>
<feature type="initiator methionine" description="Removed" evidence="1">
    <location>
        <position position="1"/>
    </location>
</feature>
<feature type="chain" id="PRO_0000136245" description="Histidine--tRNA ligase">
    <location>
        <begin position="2"/>
        <end position="424"/>
    </location>
</feature>
<feature type="mutagenesis site" description="Decrease in activity." evidence="2">
    <original>P</original>
    <variation>Q</variation>
    <variation>S</variation>
    <location>
        <position position="117"/>
    </location>
</feature>
<feature type="mutagenesis site" description="Decrease in activity." evidence="2">
    <original>S</original>
    <variation>F</variation>
    <location>
        <position position="167"/>
    </location>
</feature>
<feature type="mutagenesis site" description="Decrease in activity." evidence="2">
    <original>N</original>
    <variation>T</variation>
    <location>
        <position position="254"/>
    </location>
</feature>
<feature type="mutagenesis site" description="Decrease in activity. Defect in histidine binding." evidence="2">
    <original>A</original>
    <variation>T</variation>
    <location>
        <position position="302"/>
    </location>
</feature>
<feature type="sequence conflict" description="In Ref. 1; AAC03121." evidence="3" ref="1">
    <original>L</original>
    <variation>Y</variation>
    <location>
        <position position="422"/>
    </location>
</feature>
<keyword id="KW-0030">Aminoacyl-tRNA synthetase</keyword>
<keyword id="KW-0067">ATP-binding</keyword>
<keyword id="KW-0963">Cytoplasm</keyword>
<keyword id="KW-0436">Ligase</keyword>
<keyword id="KW-0547">Nucleotide-binding</keyword>
<keyword id="KW-0648">Protein biosynthesis</keyword>
<keyword id="KW-1185">Reference proteome</keyword>
<protein>
    <recommendedName>
        <fullName>Histidine--tRNA ligase</fullName>
        <ecNumber>6.1.1.21</ecNumber>
    </recommendedName>
    <alternativeName>
        <fullName>Histidyl-tRNA synthetase</fullName>
        <shortName>HisRS</shortName>
    </alternativeName>
</protein>
<comment type="catalytic activity">
    <reaction>
        <text>tRNA(His) + L-histidine + ATP = L-histidyl-tRNA(His) + AMP + diphosphate + H(+)</text>
        <dbReference type="Rhea" id="RHEA:17313"/>
        <dbReference type="Rhea" id="RHEA-COMP:9665"/>
        <dbReference type="Rhea" id="RHEA-COMP:9689"/>
        <dbReference type="ChEBI" id="CHEBI:15378"/>
        <dbReference type="ChEBI" id="CHEBI:30616"/>
        <dbReference type="ChEBI" id="CHEBI:33019"/>
        <dbReference type="ChEBI" id="CHEBI:57595"/>
        <dbReference type="ChEBI" id="CHEBI:78442"/>
        <dbReference type="ChEBI" id="CHEBI:78527"/>
        <dbReference type="ChEBI" id="CHEBI:456215"/>
        <dbReference type="EC" id="6.1.1.21"/>
    </reaction>
</comment>
<comment type="subunit">
    <text evidence="1">Homodimer.</text>
</comment>
<comment type="subcellular location">
    <subcellularLocation>
        <location>Cytoplasm</location>
    </subcellularLocation>
</comment>
<comment type="similarity">
    <text evidence="3">Belongs to the class-II aminoacyl-tRNA synthetase family.</text>
</comment>
<proteinExistence type="evidence at protein level"/>
<accession>O52765</accession>